<accession>C1FMU7</accession>
<comment type="function">
    <text evidence="1">Protein S19 forms a complex with S13 that binds strongly to the 16S ribosomal RNA.</text>
</comment>
<comment type="similarity">
    <text evidence="1">Belongs to the universal ribosomal protein uS19 family.</text>
</comment>
<organism>
    <name type="scientific">Clostridium botulinum (strain Kyoto / Type A2)</name>
    <dbReference type="NCBI Taxonomy" id="536232"/>
    <lineage>
        <taxon>Bacteria</taxon>
        <taxon>Bacillati</taxon>
        <taxon>Bacillota</taxon>
        <taxon>Clostridia</taxon>
        <taxon>Eubacteriales</taxon>
        <taxon>Clostridiaceae</taxon>
        <taxon>Clostridium</taxon>
    </lineage>
</organism>
<protein>
    <recommendedName>
        <fullName evidence="1">Small ribosomal subunit protein uS19</fullName>
    </recommendedName>
    <alternativeName>
        <fullName evidence="2">30S ribosomal protein S19</fullName>
    </alternativeName>
</protein>
<keyword id="KW-0687">Ribonucleoprotein</keyword>
<keyword id="KW-0689">Ribosomal protein</keyword>
<keyword id="KW-0694">RNA-binding</keyword>
<keyword id="KW-0699">rRNA-binding</keyword>
<dbReference type="EMBL" id="CP001581">
    <property type="protein sequence ID" value="ACO83912.1"/>
    <property type="molecule type" value="Genomic_DNA"/>
</dbReference>
<dbReference type="RefSeq" id="WP_003360195.1">
    <property type="nucleotide sequence ID" value="NC_012563.1"/>
</dbReference>
<dbReference type="SMR" id="C1FMU7"/>
<dbReference type="KEGG" id="cby:CLM_3944"/>
<dbReference type="eggNOG" id="COG0185">
    <property type="taxonomic scope" value="Bacteria"/>
</dbReference>
<dbReference type="HOGENOM" id="CLU_144911_0_1_9"/>
<dbReference type="Proteomes" id="UP000001374">
    <property type="component" value="Chromosome"/>
</dbReference>
<dbReference type="GO" id="GO:0005737">
    <property type="term" value="C:cytoplasm"/>
    <property type="evidence" value="ECO:0007669"/>
    <property type="project" value="UniProtKB-ARBA"/>
</dbReference>
<dbReference type="GO" id="GO:0015935">
    <property type="term" value="C:small ribosomal subunit"/>
    <property type="evidence" value="ECO:0007669"/>
    <property type="project" value="InterPro"/>
</dbReference>
<dbReference type="GO" id="GO:0019843">
    <property type="term" value="F:rRNA binding"/>
    <property type="evidence" value="ECO:0007669"/>
    <property type="project" value="UniProtKB-UniRule"/>
</dbReference>
<dbReference type="GO" id="GO:0003735">
    <property type="term" value="F:structural constituent of ribosome"/>
    <property type="evidence" value="ECO:0007669"/>
    <property type="project" value="InterPro"/>
</dbReference>
<dbReference type="GO" id="GO:0000028">
    <property type="term" value="P:ribosomal small subunit assembly"/>
    <property type="evidence" value="ECO:0007669"/>
    <property type="project" value="TreeGrafter"/>
</dbReference>
<dbReference type="GO" id="GO:0006412">
    <property type="term" value="P:translation"/>
    <property type="evidence" value="ECO:0007669"/>
    <property type="project" value="UniProtKB-UniRule"/>
</dbReference>
<dbReference type="FunFam" id="3.30.860.10:FF:000001">
    <property type="entry name" value="30S ribosomal protein S19"/>
    <property type="match status" value="1"/>
</dbReference>
<dbReference type="Gene3D" id="3.30.860.10">
    <property type="entry name" value="30s Ribosomal Protein S19, Chain A"/>
    <property type="match status" value="1"/>
</dbReference>
<dbReference type="HAMAP" id="MF_00531">
    <property type="entry name" value="Ribosomal_uS19"/>
    <property type="match status" value="1"/>
</dbReference>
<dbReference type="InterPro" id="IPR002222">
    <property type="entry name" value="Ribosomal_uS19"/>
</dbReference>
<dbReference type="InterPro" id="IPR005732">
    <property type="entry name" value="Ribosomal_uS19_bac-type"/>
</dbReference>
<dbReference type="InterPro" id="IPR020934">
    <property type="entry name" value="Ribosomal_uS19_CS"/>
</dbReference>
<dbReference type="InterPro" id="IPR023575">
    <property type="entry name" value="Ribosomal_uS19_SF"/>
</dbReference>
<dbReference type="NCBIfam" id="TIGR01050">
    <property type="entry name" value="rpsS_bact"/>
    <property type="match status" value="1"/>
</dbReference>
<dbReference type="PANTHER" id="PTHR11880">
    <property type="entry name" value="RIBOSOMAL PROTEIN S19P FAMILY MEMBER"/>
    <property type="match status" value="1"/>
</dbReference>
<dbReference type="PANTHER" id="PTHR11880:SF8">
    <property type="entry name" value="SMALL RIBOSOMAL SUBUNIT PROTEIN US19M"/>
    <property type="match status" value="1"/>
</dbReference>
<dbReference type="Pfam" id="PF00203">
    <property type="entry name" value="Ribosomal_S19"/>
    <property type="match status" value="1"/>
</dbReference>
<dbReference type="PIRSF" id="PIRSF002144">
    <property type="entry name" value="Ribosomal_S19"/>
    <property type="match status" value="1"/>
</dbReference>
<dbReference type="PRINTS" id="PR00975">
    <property type="entry name" value="RIBOSOMALS19"/>
</dbReference>
<dbReference type="SUPFAM" id="SSF54570">
    <property type="entry name" value="Ribosomal protein S19"/>
    <property type="match status" value="1"/>
</dbReference>
<dbReference type="PROSITE" id="PS00323">
    <property type="entry name" value="RIBOSOMAL_S19"/>
    <property type="match status" value="1"/>
</dbReference>
<proteinExistence type="inferred from homology"/>
<evidence type="ECO:0000255" key="1">
    <source>
        <dbReference type="HAMAP-Rule" id="MF_00531"/>
    </source>
</evidence>
<evidence type="ECO:0000305" key="2"/>
<reference key="1">
    <citation type="submission" date="2008-10" db="EMBL/GenBank/DDBJ databases">
        <title>Genome sequence of Clostridium botulinum A2 Kyoto.</title>
        <authorList>
            <person name="Shrivastava S."/>
            <person name="Brinkac L.M."/>
            <person name="Brown J.L."/>
            <person name="Bruce D."/>
            <person name="Detter C.C."/>
            <person name="Johnson E.A."/>
            <person name="Munk C.A."/>
            <person name="Smith L.A."/>
            <person name="Smith T.J."/>
            <person name="Sutton G."/>
            <person name="Brettin T.S."/>
        </authorList>
    </citation>
    <scope>NUCLEOTIDE SEQUENCE [LARGE SCALE GENOMIC DNA]</scope>
    <source>
        <strain>Kyoto / Type A2</strain>
    </source>
</reference>
<feature type="chain" id="PRO_1000146380" description="Small ribosomal subunit protein uS19">
    <location>
        <begin position="1"/>
        <end position="94"/>
    </location>
</feature>
<sequence length="94" mass="10908">MSRSVKKGPYIQEVLLKRINEMNKNGEKKVLKTWSRSSTIFPQMIGHTIAVHDGRKHVPVYITEDMVGHKLGEFVLTRTYRGHDDKSEKSSRLR</sequence>
<name>RS19_CLOBJ</name>
<gene>
    <name evidence="1" type="primary">rpsS</name>
    <name type="ordered locus">CLM_3944</name>
</gene>